<gene>
    <name type="primary">Tomm40</name>
    <name type="synonym">Mom35</name>
    <name type="synonym">Tom40</name>
</gene>
<reference key="1">
    <citation type="journal article" date="2000" name="J. Bioenerg. Biomembr.">
        <title>Cloning and characterization of a 35-kDa mouse mitochondrial outer membrane protein MOM35 with high homology to Tom40.</title>
        <authorList>
            <person name="Lee Rivera I."/>
            <person name="Shore G.C."/>
            <person name="Schleiff E."/>
        </authorList>
    </citation>
    <scope>NUCLEOTIDE SEQUENCE [MRNA]</scope>
</reference>
<reference key="2">
    <citation type="journal article" date="2001" name="Int. J. Cancer">
        <title>Genetic identity and differential expression of p38.5 (Haymaker) in human malignant and non-malignant cells.</title>
        <authorList>
            <person name="Das B."/>
            <person name="Tao S.-Z."/>
            <person name="Mushnitsky R."/>
            <person name="Norin A.J."/>
        </authorList>
    </citation>
    <scope>NUCLEOTIDE SEQUENCE [MRNA]</scope>
    <source>
        <tissue>Mastocytoma</tissue>
    </source>
</reference>
<reference key="3">
    <citation type="submission" date="1998-01" db="EMBL/GenBank/DDBJ databases">
        <title>A transcriptional map in the region of 19q13 derived using direct sequencing and exon trapping.</title>
        <authorList>
            <person name="Yoshiura K."/>
            <person name="Murray J.C."/>
        </authorList>
    </citation>
    <scope>NUCLEOTIDE SEQUENCE [MRNA]</scope>
</reference>
<reference key="4">
    <citation type="journal article" date="2005" name="Science">
        <title>The transcriptional landscape of the mammalian genome.</title>
        <authorList>
            <person name="Carninci P."/>
            <person name="Kasukawa T."/>
            <person name="Katayama S."/>
            <person name="Gough J."/>
            <person name="Frith M.C."/>
            <person name="Maeda N."/>
            <person name="Oyama R."/>
            <person name="Ravasi T."/>
            <person name="Lenhard B."/>
            <person name="Wells C."/>
            <person name="Kodzius R."/>
            <person name="Shimokawa K."/>
            <person name="Bajic V.B."/>
            <person name="Brenner S.E."/>
            <person name="Batalov S."/>
            <person name="Forrest A.R."/>
            <person name="Zavolan M."/>
            <person name="Davis M.J."/>
            <person name="Wilming L.G."/>
            <person name="Aidinis V."/>
            <person name="Allen J.E."/>
            <person name="Ambesi-Impiombato A."/>
            <person name="Apweiler R."/>
            <person name="Aturaliya R.N."/>
            <person name="Bailey T.L."/>
            <person name="Bansal M."/>
            <person name="Baxter L."/>
            <person name="Beisel K.W."/>
            <person name="Bersano T."/>
            <person name="Bono H."/>
            <person name="Chalk A.M."/>
            <person name="Chiu K.P."/>
            <person name="Choudhary V."/>
            <person name="Christoffels A."/>
            <person name="Clutterbuck D.R."/>
            <person name="Crowe M.L."/>
            <person name="Dalla E."/>
            <person name="Dalrymple B.P."/>
            <person name="de Bono B."/>
            <person name="Della Gatta G."/>
            <person name="di Bernardo D."/>
            <person name="Down T."/>
            <person name="Engstrom P."/>
            <person name="Fagiolini M."/>
            <person name="Faulkner G."/>
            <person name="Fletcher C.F."/>
            <person name="Fukushima T."/>
            <person name="Furuno M."/>
            <person name="Futaki S."/>
            <person name="Gariboldi M."/>
            <person name="Georgii-Hemming P."/>
            <person name="Gingeras T.R."/>
            <person name="Gojobori T."/>
            <person name="Green R.E."/>
            <person name="Gustincich S."/>
            <person name="Harbers M."/>
            <person name="Hayashi Y."/>
            <person name="Hensch T.K."/>
            <person name="Hirokawa N."/>
            <person name="Hill D."/>
            <person name="Huminiecki L."/>
            <person name="Iacono M."/>
            <person name="Ikeo K."/>
            <person name="Iwama A."/>
            <person name="Ishikawa T."/>
            <person name="Jakt M."/>
            <person name="Kanapin A."/>
            <person name="Katoh M."/>
            <person name="Kawasawa Y."/>
            <person name="Kelso J."/>
            <person name="Kitamura H."/>
            <person name="Kitano H."/>
            <person name="Kollias G."/>
            <person name="Krishnan S.P."/>
            <person name="Kruger A."/>
            <person name="Kummerfeld S.K."/>
            <person name="Kurochkin I.V."/>
            <person name="Lareau L.F."/>
            <person name="Lazarevic D."/>
            <person name="Lipovich L."/>
            <person name="Liu J."/>
            <person name="Liuni S."/>
            <person name="McWilliam S."/>
            <person name="Madan Babu M."/>
            <person name="Madera M."/>
            <person name="Marchionni L."/>
            <person name="Matsuda H."/>
            <person name="Matsuzawa S."/>
            <person name="Miki H."/>
            <person name="Mignone F."/>
            <person name="Miyake S."/>
            <person name="Morris K."/>
            <person name="Mottagui-Tabar S."/>
            <person name="Mulder N."/>
            <person name="Nakano N."/>
            <person name="Nakauchi H."/>
            <person name="Ng P."/>
            <person name="Nilsson R."/>
            <person name="Nishiguchi S."/>
            <person name="Nishikawa S."/>
            <person name="Nori F."/>
            <person name="Ohara O."/>
            <person name="Okazaki Y."/>
            <person name="Orlando V."/>
            <person name="Pang K.C."/>
            <person name="Pavan W.J."/>
            <person name="Pavesi G."/>
            <person name="Pesole G."/>
            <person name="Petrovsky N."/>
            <person name="Piazza S."/>
            <person name="Reed J."/>
            <person name="Reid J.F."/>
            <person name="Ring B.Z."/>
            <person name="Ringwald M."/>
            <person name="Rost B."/>
            <person name="Ruan Y."/>
            <person name="Salzberg S.L."/>
            <person name="Sandelin A."/>
            <person name="Schneider C."/>
            <person name="Schoenbach C."/>
            <person name="Sekiguchi K."/>
            <person name="Semple C.A."/>
            <person name="Seno S."/>
            <person name="Sessa L."/>
            <person name="Sheng Y."/>
            <person name="Shibata Y."/>
            <person name="Shimada H."/>
            <person name="Shimada K."/>
            <person name="Silva D."/>
            <person name="Sinclair B."/>
            <person name="Sperling S."/>
            <person name="Stupka E."/>
            <person name="Sugiura K."/>
            <person name="Sultana R."/>
            <person name="Takenaka Y."/>
            <person name="Taki K."/>
            <person name="Tammoja K."/>
            <person name="Tan S.L."/>
            <person name="Tang S."/>
            <person name="Taylor M.S."/>
            <person name="Tegner J."/>
            <person name="Teichmann S.A."/>
            <person name="Ueda H.R."/>
            <person name="van Nimwegen E."/>
            <person name="Verardo R."/>
            <person name="Wei C.L."/>
            <person name="Yagi K."/>
            <person name="Yamanishi H."/>
            <person name="Zabarovsky E."/>
            <person name="Zhu S."/>
            <person name="Zimmer A."/>
            <person name="Hide W."/>
            <person name="Bult C."/>
            <person name="Grimmond S.M."/>
            <person name="Teasdale R.D."/>
            <person name="Liu E.T."/>
            <person name="Brusic V."/>
            <person name="Quackenbush J."/>
            <person name="Wahlestedt C."/>
            <person name="Mattick J.S."/>
            <person name="Hume D.A."/>
            <person name="Kai C."/>
            <person name="Sasaki D."/>
            <person name="Tomaru Y."/>
            <person name="Fukuda S."/>
            <person name="Kanamori-Katayama M."/>
            <person name="Suzuki M."/>
            <person name="Aoki J."/>
            <person name="Arakawa T."/>
            <person name="Iida J."/>
            <person name="Imamura K."/>
            <person name="Itoh M."/>
            <person name="Kato T."/>
            <person name="Kawaji H."/>
            <person name="Kawagashira N."/>
            <person name="Kawashima T."/>
            <person name="Kojima M."/>
            <person name="Kondo S."/>
            <person name="Konno H."/>
            <person name="Nakano K."/>
            <person name="Ninomiya N."/>
            <person name="Nishio T."/>
            <person name="Okada M."/>
            <person name="Plessy C."/>
            <person name="Shibata K."/>
            <person name="Shiraki T."/>
            <person name="Suzuki S."/>
            <person name="Tagami M."/>
            <person name="Waki K."/>
            <person name="Watahiki A."/>
            <person name="Okamura-Oho Y."/>
            <person name="Suzuki H."/>
            <person name="Kawai J."/>
            <person name="Hayashizaki Y."/>
        </authorList>
    </citation>
    <scope>NUCLEOTIDE SEQUENCE [LARGE SCALE MRNA]</scope>
    <source>
        <strain>C57BL/6J</strain>
        <strain>NOD</strain>
        <tissue>Corpus striatum</tissue>
        <tissue>Dendritic cell</tissue>
        <tissue>Lung</tissue>
        <tissue>Macrophage</tissue>
    </source>
</reference>
<reference key="5">
    <citation type="journal article" date="2004" name="Genome Res.">
        <title>The status, quality, and expansion of the NIH full-length cDNA project: the Mammalian Gene Collection (MGC).</title>
        <authorList>
            <consortium name="The MGC Project Team"/>
        </authorList>
    </citation>
    <scope>NUCLEOTIDE SEQUENCE [LARGE SCALE MRNA]</scope>
    <source>
        <tissue>Brain</tissue>
    </source>
</reference>
<reference key="6">
    <citation type="submission" date="2009-01" db="UniProtKB">
        <authorList>
            <person name="Lubec G."/>
            <person name="Sunyer B."/>
            <person name="Chen W.-Q."/>
        </authorList>
    </citation>
    <scope>PROTEIN SEQUENCE OF 185-195; 316-330 AND 352-361</scope>
    <scope>IDENTIFICATION BY MASS SPECTROMETRY</scope>
    <source>
        <strain>OF1</strain>
        <tissue>Hippocampus</tissue>
    </source>
</reference>
<reference key="7">
    <citation type="journal article" date="2010" name="Cell">
        <title>A tissue-specific atlas of mouse protein phosphorylation and expression.</title>
        <authorList>
            <person name="Huttlin E.L."/>
            <person name="Jedrychowski M.P."/>
            <person name="Elias J.E."/>
            <person name="Goswami T."/>
            <person name="Rad R."/>
            <person name="Beausoleil S.A."/>
            <person name="Villen J."/>
            <person name="Haas W."/>
            <person name="Sowa M.E."/>
            <person name="Gygi S.P."/>
        </authorList>
    </citation>
    <scope>IDENTIFICATION BY MASS SPECTROMETRY [LARGE SCALE ANALYSIS]</scope>
    <source>
        <tissue>Brown adipose tissue</tissue>
        <tissue>Heart</tissue>
        <tissue>Kidney</tissue>
        <tissue>Liver</tissue>
        <tissue>Lung</tissue>
        <tissue>Pancreas</tissue>
        <tissue>Spleen</tissue>
        <tissue>Testis</tissue>
    </source>
</reference>
<name>TOM40_MOUSE</name>
<feature type="chain" id="PRO_0000051524" description="Mitochondrial import receptor subunit TOM40 homolog">
    <location>
        <begin position="1"/>
        <end position="361"/>
    </location>
</feature>
<feature type="region of interest" description="Disordered" evidence="4">
    <location>
        <begin position="1"/>
        <end position="73"/>
    </location>
</feature>
<feature type="compositionally biased region" description="Pro residues" evidence="4">
    <location>
        <begin position="11"/>
        <end position="36"/>
    </location>
</feature>
<feature type="compositionally biased region" description="Gly residues" evidence="4">
    <location>
        <begin position="40"/>
        <end position="50"/>
    </location>
</feature>
<feature type="compositionally biased region" description="Low complexity" evidence="4">
    <location>
        <begin position="51"/>
        <end position="69"/>
    </location>
</feature>
<feature type="sequence conflict" description="In Ref. 1; AAF21906." evidence="5" ref="1">
    <original>MGNVLAASSPPAGPPPPPTPSLVGLPPPPPSPPGFTLPPLGGGLGTGSSTGRGSERTPGAAASGAAAASEDGSCGCLP</original>
    <variation>MMKSGDWVKHWPWFGTDSRGCGQRRCGGLGRWELRMPA</variation>
    <location>
        <begin position="1"/>
        <end position="78"/>
    </location>
</feature>
<feature type="sequence conflict" description="In Ref. 3; AAC82341." evidence="5" ref="3">
    <original>GP</original>
    <variation>R</variation>
    <location>
        <begin position="13"/>
        <end position="14"/>
    </location>
</feature>
<feature type="sequence conflict" description="In Ref. 4; BAE42165." evidence="5" ref="4">
    <original>E</original>
    <variation>D</variation>
    <location>
        <position position="70"/>
    </location>
</feature>
<feature type="sequence conflict" description="In Ref. 3; AAL46628." evidence="5" ref="3">
    <original>E</original>
    <variation>G</variation>
    <location>
        <position position="126"/>
    </location>
</feature>
<feature type="sequence conflict" description="In Ref. 3; AAC82341." evidence="5" ref="3">
    <location>
        <begin position="185"/>
        <end position="234"/>
    </location>
</feature>
<keyword id="KW-0903">Direct protein sequencing</keyword>
<keyword id="KW-0406">Ion transport</keyword>
<keyword id="KW-0472">Membrane</keyword>
<keyword id="KW-0496">Mitochondrion</keyword>
<keyword id="KW-1000">Mitochondrion outer membrane</keyword>
<keyword id="KW-0626">Porin</keyword>
<keyword id="KW-0653">Protein transport</keyword>
<keyword id="KW-1185">Reference proteome</keyword>
<keyword id="KW-0812">Transmembrane</keyword>
<keyword id="KW-1134">Transmembrane beta strand</keyword>
<keyword id="KW-0813">Transport</keyword>
<sequence>MGNVLAASSPPAGPPPPPTPSLVGLPPPPPSPPGFTLPPLGGGLGTGSSTGRGSERTPGAAASGAAAASEDGSCGCLPNPGTFEECHRKCKELFPVQMEGVKLTVNKGLSNRFQVTHTVALGTIGESNYHFGVTYVGTKQLSPTEAFPVLVGDMDNSGSLNAQVIHQLSPGLRSKMAIQTQQSKFVNWQVDGEYRGSDFTAAVTLGNPDVLVGSGILVAHYLQSITPCLALGGELVYHRRPGEEGTVMSLAGKYTLNNWLATVTLGQAGMHATYYHKASDQLQVGVEFEASTRMQDTSASFGYQLDLPKANFLFKGSVNSNWIVGATLEKKLPPLPLTLSLCAFLNHRKNKFLCGFGLTIG</sequence>
<comment type="function">
    <text evidence="1">Channel-forming protein essential for import of protein precursors into mitochondria. Plays a role in the assembly of the mitochondrial membrane respiratory chain NADH dehydrogenase (Complex I) by forming a complex with BCAP31 and mediating the translocation of Complex I components from the cytosol to the mitochondria.</text>
</comment>
<comment type="subunit">
    <text evidence="1 2">Forms part of the preprotein translocase complex of the outer mitochondrial membrane (TOM complex) which consists of at least 7 different proteins (TOMM5, TOMM6, TOMM7, TOMM20, TOMM22, TOMM40 and TOMM70). Interacts with mitochondrial targeting sequences. Interacts with TIMM29; linking the TIM22 complex to the TOM complex. Forms a complex with BCAP31 (via C-terminus) which mediates the translocation of components of the mitochondrial membrane respiratory chain NADH dehydrogenase (Complex I) from the cytosol to the mitochondria (By similarity). Interacts (via N-terminus) with CYP1A1 (via mitochondrial targeting signal); this interaction is required for CYP1A1 translocation across the mitochondrial outer membrane (By similarity).</text>
</comment>
<comment type="subcellular location">
    <subcellularLocation>
        <location evidence="1">Mitochondrion outer membrane</location>
        <topology evidence="3">Multi-pass membrane protein</topology>
    </subcellularLocation>
    <text evidence="1">Associates with the mitochondria-associated ER membrane via interaction with BCAP31.</text>
</comment>
<comment type="similarity">
    <text evidence="5">Belongs to the Tom40 family.</text>
</comment>
<comment type="sequence caution" evidence="5">
    <conflict type="frameshift">
        <sequence resource="EMBL-CDS" id="AAC82341"/>
    </conflict>
</comment>
<dbReference type="EMBL" id="AF109918">
    <property type="protein sequence ID" value="AAF21906.1"/>
    <property type="molecule type" value="mRNA"/>
</dbReference>
<dbReference type="EMBL" id="AF316403">
    <property type="protein sequence ID" value="AAL46628.1"/>
    <property type="molecule type" value="mRNA"/>
</dbReference>
<dbReference type="EMBL" id="AF316404">
    <property type="protein sequence ID" value="AAL46629.1"/>
    <property type="molecule type" value="mRNA"/>
</dbReference>
<dbReference type="EMBL" id="AF043249">
    <property type="protein sequence ID" value="AAC82341.1"/>
    <property type="status" value="ALT_FRAME"/>
    <property type="molecule type" value="mRNA"/>
</dbReference>
<dbReference type="EMBL" id="AK150019">
    <property type="protein sequence ID" value="BAE29244.1"/>
    <property type="molecule type" value="mRNA"/>
</dbReference>
<dbReference type="EMBL" id="AK163759">
    <property type="protein sequence ID" value="BAE37483.1"/>
    <property type="molecule type" value="mRNA"/>
</dbReference>
<dbReference type="EMBL" id="AK164570">
    <property type="protein sequence ID" value="BAE37837.1"/>
    <property type="molecule type" value="mRNA"/>
</dbReference>
<dbReference type="EMBL" id="AK165173">
    <property type="protein sequence ID" value="BAE38058.1"/>
    <property type="molecule type" value="mRNA"/>
</dbReference>
<dbReference type="EMBL" id="AK170991">
    <property type="protein sequence ID" value="BAE42165.1"/>
    <property type="molecule type" value="mRNA"/>
</dbReference>
<dbReference type="EMBL" id="BC100452">
    <property type="protein sequence ID" value="AAI00453.1"/>
    <property type="molecule type" value="mRNA"/>
</dbReference>
<dbReference type="CCDS" id="CCDS52062.1"/>
<dbReference type="RefSeq" id="NP_001103218.1">
    <property type="nucleotide sequence ID" value="NM_001109748.1"/>
</dbReference>
<dbReference type="RefSeq" id="NP_058567.2">
    <property type="nucleotide sequence ID" value="NM_016871.2"/>
</dbReference>
<dbReference type="SMR" id="Q9QYA2"/>
<dbReference type="BioGRID" id="207293">
    <property type="interactions" value="4"/>
</dbReference>
<dbReference type="FunCoup" id="Q9QYA2">
    <property type="interactions" value="2210"/>
</dbReference>
<dbReference type="IntAct" id="Q9QYA2">
    <property type="interactions" value="3"/>
</dbReference>
<dbReference type="MINT" id="Q9QYA2"/>
<dbReference type="STRING" id="10090.ENSMUSP00000032555"/>
<dbReference type="GlyGen" id="Q9QYA2">
    <property type="glycosylation" value="2 sites, 1 O-linked glycan (1 site)"/>
</dbReference>
<dbReference type="iPTMnet" id="Q9QYA2"/>
<dbReference type="PhosphoSitePlus" id="Q9QYA2"/>
<dbReference type="SwissPalm" id="Q9QYA2"/>
<dbReference type="jPOST" id="Q9QYA2"/>
<dbReference type="PaxDb" id="10090-ENSMUSP00000032555"/>
<dbReference type="PeptideAtlas" id="Q9QYA2"/>
<dbReference type="ProteomicsDB" id="259152"/>
<dbReference type="Pumba" id="Q9QYA2"/>
<dbReference type="Antibodypedia" id="3972">
    <property type="antibodies" value="165 antibodies from 34 providers"/>
</dbReference>
<dbReference type="DNASU" id="53333"/>
<dbReference type="Ensembl" id="ENSMUST00000032555.10">
    <property type="protein sequence ID" value="ENSMUSP00000032555.10"/>
    <property type="gene ID" value="ENSMUSG00000002984.18"/>
</dbReference>
<dbReference type="Ensembl" id="ENSMUST00000093552.12">
    <property type="protein sequence ID" value="ENSMUSP00000104090.5"/>
    <property type="gene ID" value="ENSMUSG00000002984.18"/>
</dbReference>
<dbReference type="GeneID" id="53333"/>
<dbReference type="KEGG" id="mmu:53333"/>
<dbReference type="UCSC" id="uc009fna.2">
    <property type="organism name" value="mouse"/>
</dbReference>
<dbReference type="AGR" id="MGI:1858259"/>
<dbReference type="CTD" id="10452"/>
<dbReference type="MGI" id="MGI:1858259">
    <property type="gene designation" value="Tomm40"/>
</dbReference>
<dbReference type="VEuPathDB" id="HostDB:ENSMUSG00000002984"/>
<dbReference type="eggNOG" id="KOG3296">
    <property type="taxonomic scope" value="Eukaryota"/>
</dbReference>
<dbReference type="GeneTree" id="ENSGT00390000003308"/>
<dbReference type="HOGENOM" id="CLU_054399_0_0_1"/>
<dbReference type="InParanoid" id="Q9QYA2"/>
<dbReference type="OMA" id="TRFNYRW"/>
<dbReference type="OrthoDB" id="19656at2759"/>
<dbReference type="PhylomeDB" id="Q9QYA2"/>
<dbReference type="TreeFam" id="TF106204"/>
<dbReference type="Reactome" id="R-MMU-5205685">
    <property type="pathway name" value="PINK1-PRKN Mediated Mitophagy"/>
</dbReference>
<dbReference type="BioGRID-ORCS" id="53333">
    <property type="hits" value="25 hits in 77 CRISPR screens"/>
</dbReference>
<dbReference type="ChiTaRS" id="Tomm40">
    <property type="organism name" value="mouse"/>
</dbReference>
<dbReference type="PRO" id="PR:Q9QYA2"/>
<dbReference type="Proteomes" id="UP000000589">
    <property type="component" value="Chromosome 7"/>
</dbReference>
<dbReference type="RNAct" id="Q9QYA2">
    <property type="molecule type" value="protein"/>
</dbReference>
<dbReference type="Bgee" id="ENSMUSG00000002984">
    <property type="expression patterns" value="Expressed in yolk sac and 252 other cell types or tissues"/>
</dbReference>
<dbReference type="ExpressionAtlas" id="Q9QYA2">
    <property type="expression patterns" value="baseline and differential"/>
</dbReference>
<dbReference type="GO" id="GO:0005829">
    <property type="term" value="C:cytosol"/>
    <property type="evidence" value="ECO:0007669"/>
    <property type="project" value="Ensembl"/>
</dbReference>
<dbReference type="GO" id="GO:0044233">
    <property type="term" value="C:mitochondria-associated endoplasmic reticulum membrane contact site"/>
    <property type="evidence" value="ECO:0007669"/>
    <property type="project" value="Ensembl"/>
</dbReference>
<dbReference type="GO" id="GO:0005743">
    <property type="term" value="C:mitochondrial inner membrane"/>
    <property type="evidence" value="ECO:0007669"/>
    <property type="project" value="Ensembl"/>
</dbReference>
<dbReference type="GO" id="GO:0031966">
    <property type="term" value="C:mitochondrial membrane"/>
    <property type="evidence" value="ECO:0000314"/>
    <property type="project" value="MGI"/>
</dbReference>
<dbReference type="GO" id="GO:0005741">
    <property type="term" value="C:mitochondrial outer membrane"/>
    <property type="evidence" value="ECO:0000314"/>
    <property type="project" value="MGI"/>
</dbReference>
<dbReference type="GO" id="GO:0005742">
    <property type="term" value="C:mitochondrial outer membrane translocase complex"/>
    <property type="evidence" value="ECO:0007669"/>
    <property type="project" value="Ensembl"/>
</dbReference>
<dbReference type="GO" id="GO:0005739">
    <property type="term" value="C:mitochondrion"/>
    <property type="evidence" value="ECO:0000314"/>
    <property type="project" value="MGI"/>
</dbReference>
<dbReference type="GO" id="GO:0046930">
    <property type="term" value="C:pore complex"/>
    <property type="evidence" value="ECO:0007669"/>
    <property type="project" value="UniProtKB-KW"/>
</dbReference>
<dbReference type="GO" id="GO:0015288">
    <property type="term" value="F:porin activity"/>
    <property type="evidence" value="ECO:0007669"/>
    <property type="project" value="UniProtKB-KW"/>
</dbReference>
<dbReference type="GO" id="GO:0008320">
    <property type="term" value="F:protein transmembrane transporter activity"/>
    <property type="evidence" value="ECO:0007669"/>
    <property type="project" value="InterPro"/>
</dbReference>
<dbReference type="GO" id="GO:0006811">
    <property type="term" value="P:monoatomic ion transport"/>
    <property type="evidence" value="ECO:0007669"/>
    <property type="project" value="UniProtKB-KW"/>
</dbReference>
<dbReference type="GO" id="GO:0030150">
    <property type="term" value="P:protein import into mitochondrial matrix"/>
    <property type="evidence" value="ECO:0007669"/>
    <property type="project" value="InterPro"/>
</dbReference>
<dbReference type="GO" id="GO:0006626">
    <property type="term" value="P:protein targeting to mitochondrion"/>
    <property type="evidence" value="ECO:0000250"/>
    <property type="project" value="UniProtKB"/>
</dbReference>
<dbReference type="CDD" id="cd07305">
    <property type="entry name" value="Porin3_Tom40"/>
    <property type="match status" value="1"/>
</dbReference>
<dbReference type="FunFam" id="2.40.160.10:FF:000005">
    <property type="entry name" value="mitochondrial import receptor subunit TOM40 homolog"/>
    <property type="match status" value="1"/>
</dbReference>
<dbReference type="Gene3D" id="2.40.160.10">
    <property type="entry name" value="Porin"/>
    <property type="match status" value="1"/>
</dbReference>
<dbReference type="InterPro" id="IPR023614">
    <property type="entry name" value="Porin_dom_sf"/>
</dbReference>
<dbReference type="InterPro" id="IPR027246">
    <property type="entry name" value="Porin_Euk/Tom40"/>
</dbReference>
<dbReference type="InterPro" id="IPR037930">
    <property type="entry name" value="Tom40"/>
</dbReference>
<dbReference type="PANTHER" id="PTHR10802">
    <property type="entry name" value="MITOCHONDRIAL IMPORT RECEPTOR SUBUNIT TOM40"/>
    <property type="match status" value="1"/>
</dbReference>
<dbReference type="Pfam" id="PF01459">
    <property type="entry name" value="Porin_3"/>
    <property type="match status" value="1"/>
</dbReference>
<organism>
    <name type="scientific">Mus musculus</name>
    <name type="common">Mouse</name>
    <dbReference type="NCBI Taxonomy" id="10090"/>
    <lineage>
        <taxon>Eukaryota</taxon>
        <taxon>Metazoa</taxon>
        <taxon>Chordata</taxon>
        <taxon>Craniata</taxon>
        <taxon>Vertebrata</taxon>
        <taxon>Euteleostomi</taxon>
        <taxon>Mammalia</taxon>
        <taxon>Eutheria</taxon>
        <taxon>Euarchontoglires</taxon>
        <taxon>Glires</taxon>
        <taxon>Rodentia</taxon>
        <taxon>Myomorpha</taxon>
        <taxon>Muroidea</taxon>
        <taxon>Muridae</taxon>
        <taxon>Murinae</taxon>
        <taxon>Mus</taxon>
        <taxon>Mus</taxon>
    </lineage>
</organism>
<protein>
    <recommendedName>
        <fullName>Mitochondrial import receptor subunit TOM40 homolog</fullName>
    </recommendedName>
    <alternativeName>
        <fullName>Mitochondrial outer membrane protein of 35 kDa</fullName>
        <shortName>MOM35</shortName>
    </alternativeName>
    <alternativeName>
        <fullName>Protein Haymaker</fullName>
    </alternativeName>
    <alternativeName>
        <fullName>Translocase of outer membrane 40 kDa subunit homolog</fullName>
    </alternativeName>
</protein>
<proteinExistence type="evidence at protein level"/>
<accession>Q9QYA2</accession>
<accession>Q3TBZ2</accession>
<accession>Q3TQA1</accession>
<accession>Q8VI26</accession>
<accession>Q8VI27</accession>
<accession>Q9Z2N1</accession>
<evidence type="ECO:0000250" key="1">
    <source>
        <dbReference type="UniProtKB" id="O96008"/>
    </source>
</evidence>
<evidence type="ECO:0000250" key="2">
    <source>
        <dbReference type="UniProtKB" id="Q75Q40"/>
    </source>
</evidence>
<evidence type="ECO:0000255" key="3"/>
<evidence type="ECO:0000256" key="4">
    <source>
        <dbReference type="SAM" id="MobiDB-lite"/>
    </source>
</evidence>
<evidence type="ECO:0000305" key="5"/>